<organism>
    <name type="scientific">Mus musculus</name>
    <name type="common">Mouse</name>
    <dbReference type="NCBI Taxonomy" id="10090"/>
    <lineage>
        <taxon>Eukaryota</taxon>
        <taxon>Metazoa</taxon>
        <taxon>Chordata</taxon>
        <taxon>Craniata</taxon>
        <taxon>Vertebrata</taxon>
        <taxon>Euteleostomi</taxon>
        <taxon>Mammalia</taxon>
        <taxon>Eutheria</taxon>
        <taxon>Euarchontoglires</taxon>
        <taxon>Glires</taxon>
        <taxon>Rodentia</taxon>
        <taxon>Myomorpha</taxon>
        <taxon>Muroidea</taxon>
        <taxon>Muridae</taxon>
        <taxon>Murinae</taxon>
        <taxon>Mus</taxon>
        <taxon>Mus</taxon>
    </lineage>
</organism>
<name>STK24_MOUSE</name>
<keyword id="KW-0007">Acetylation</keyword>
<keyword id="KW-0053">Apoptosis</keyword>
<keyword id="KW-0067">ATP-binding</keyword>
<keyword id="KW-0963">Cytoplasm</keyword>
<keyword id="KW-0418">Kinase</keyword>
<keyword id="KW-0460">Magnesium</keyword>
<keyword id="KW-0472">Membrane</keyword>
<keyword id="KW-0479">Metal-binding</keyword>
<keyword id="KW-0547">Nucleotide-binding</keyword>
<keyword id="KW-0539">Nucleus</keyword>
<keyword id="KW-0597">Phosphoprotein</keyword>
<keyword id="KW-1185">Reference proteome</keyword>
<keyword id="KW-0723">Serine/threonine-protein kinase</keyword>
<keyword id="KW-0808">Transferase</keyword>
<sequence length="431" mass="47954">MAHSPVQSGLPGMQNLKADPEELFTKLEKIGKGSFGEVFKGIDNRTQKVVAIKIIDLEEAEDEIEDIQQEITVLSQCDSPYVTKYYGSYLKDTKLWIIMEYLGGGSALDLLEPGPLDEIQIATILREILKGLDYLHSEKKIHRDIKAANVLLSEHGEVKLADFGVAGQLTDTQIKRNTFVGTPFWMAPEVIKQSAYDSKADIWSLGITAIELAKGEPPHSELHPMKVLFLIPKNNPPTLEGNYSKPLKEFVEACLNKEPSFRPTAKELLKHKFIIRNAKKTSYLTELIDRYKRWKAEQSHEDSSSEDSDVETDGQASGGSDSGDWIFTIREKDPKNLENGTLQLSDLERNKMKDIPKRPFSQCLSTIISPLFAELKEKSQACGGNLGSIEELRGAIYLAEEACPGISDTMVAQLVQRLQRYSLSGGGASAH</sequence>
<gene>
    <name evidence="6" type="primary">Stk24</name>
    <name evidence="2" type="synonym">Mst3</name>
    <name evidence="2" type="synonym">Stk3</name>
</gene>
<dbReference type="EC" id="2.7.11.1"/>
<dbReference type="EMBL" id="BC004650">
    <property type="protein sequence ID" value="AAH04650.1"/>
    <property type="molecule type" value="mRNA"/>
</dbReference>
<dbReference type="CCDS" id="CCDS37016.1"/>
<dbReference type="RefSeq" id="NP_663440.1">
    <property type="nucleotide sequence ID" value="NM_145465.2"/>
</dbReference>
<dbReference type="SMR" id="Q99KH8"/>
<dbReference type="BioGRID" id="230135">
    <property type="interactions" value="22"/>
</dbReference>
<dbReference type="FunCoup" id="Q99KH8">
    <property type="interactions" value="3715"/>
</dbReference>
<dbReference type="IntAct" id="Q99KH8">
    <property type="interactions" value="1"/>
</dbReference>
<dbReference type="MINT" id="Q99KH8"/>
<dbReference type="STRING" id="10090.ENSMUSP00000078746"/>
<dbReference type="GlyGen" id="Q99KH8">
    <property type="glycosylation" value="1 site, 1 N-linked glycan (1 site)"/>
</dbReference>
<dbReference type="iPTMnet" id="Q99KH8"/>
<dbReference type="PhosphoSitePlus" id="Q99KH8"/>
<dbReference type="SwissPalm" id="Q99KH8"/>
<dbReference type="jPOST" id="Q99KH8"/>
<dbReference type="PaxDb" id="10090-ENSMUSP00000078746"/>
<dbReference type="ProteomicsDB" id="257452"/>
<dbReference type="Pumba" id="Q99KH8"/>
<dbReference type="Antibodypedia" id="10785">
    <property type="antibodies" value="349 antibodies from 34 providers"/>
</dbReference>
<dbReference type="DNASU" id="223255"/>
<dbReference type="Ensembl" id="ENSMUST00000079817.8">
    <property type="protein sequence ID" value="ENSMUSP00000078746.8"/>
    <property type="gene ID" value="ENSMUSG00000063410.9"/>
</dbReference>
<dbReference type="GeneID" id="223255"/>
<dbReference type="KEGG" id="mmu:223255"/>
<dbReference type="UCSC" id="uc007vac.1">
    <property type="organism name" value="mouse"/>
</dbReference>
<dbReference type="AGR" id="MGI:2385007"/>
<dbReference type="CTD" id="8428"/>
<dbReference type="MGI" id="MGI:2385007">
    <property type="gene designation" value="Stk24"/>
</dbReference>
<dbReference type="VEuPathDB" id="HostDB:ENSMUSG00000063410"/>
<dbReference type="eggNOG" id="KOG0201">
    <property type="taxonomic scope" value="Eukaryota"/>
</dbReference>
<dbReference type="GeneTree" id="ENSGT00940000153476"/>
<dbReference type="HOGENOM" id="CLU_000288_63_23_1"/>
<dbReference type="InParanoid" id="Q99KH8"/>
<dbReference type="OMA" id="KFIMRNA"/>
<dbReference type="OrthoDB" id="8693905at2759"/>
<dbReference type="PhylomeDB" id="Q99KH8"/>
<dbReference type="TreeFam" id="TF354217"/>
<dbReference type="Reactome" id="R-MMU-111465">
    <property type="pathway name" value="Apoptotic cleavage of cellular proteins"/>
</dbReference>
<dbReference type="Reactome" id="R-MMU-75153">
    <property type="pathway name" value="Apoptotic execution phase"/>
</dbReference>
<dbReference type="BioGRID-ORCS" id="223255">
    <property type="hits" value="3 hits in 81 CRISPR screens"/>
</dbReference>
<dbReference type="ChiTaRS" id="Stk24">
    <property type="organism name" value="mouse"/>
</dbReference>
<dbReference type="PRO" id="PR:Q99KH8"/>
<dbReference type="Proteomes" id="UP000000589">
    <property type="component" value="Chromosome 14"/>
</dbReference>
<dbReference type="RNAct" id="Q99KH8">
    <property type="molecule type" value="protein"/>
</dbReference>
<dbReference type="Bgee" id="ENSMUSG00000063410">
    <property type="expression patterns" value="Expressed in blood and 249 other cell types or tissues"/>
</dbReference>
<dbReference type="ExpressionAtlas" id="Q99KH8">
    <property type="expression patterns" value="baseline and differential"/>
</dbReference>
<dbReference type="GO" id="GO:0005737">
    <property type="term" value="C:cytoplasm"/>
    <property type="evidence" value="ECO:0000250"/>
    <property type="project" value="UniProtKB"/>
</dbReference>
<dbReference type="GO" id="GO:0005829">
    <property type="term" value="C:cytosol"/>
    <property type="evidence" value="ECO:0007669"/>
    <property type="project" value="Ensembl"/>
</dbReference>
<dbReference type="GO" id="GO:0090443">
    <property type="term" value="C:FAR/SIN/STRIPAK complex"/>
    <property type="evidence" value="ECO:0000250"/>
    <property type="project" value="UniProtKB"/>
</dbReference>
<dbReference type="GO" id="GO:0016020">
    <property type="term" value="C:membrane"/>
    <property type="evidence" value="ECO:0007669"/>
    <property type="project" value="UniProtKB-SubCell"/>
</dbReference>
<dbReference type="GO" id="GO:0005730">
    <property type="term" value="C:nucleolus"/>
    <property type="evidence" value="ECO:0007669"/>
    <property type="project" value="Ensembl"/>
</dbReference>
<dbReference type="GO" id="GO:0005634">
    <property type="term" value="C:nucleus"/>
    <property type="evidence" value="ECO:0000250"/>
    <property type="project" value="UniProtKB"/>
</dbReference>
<dbReference type="GO" id="GO:0005524">
    <property type="term" value="F:ATP binding"/>
    <property type="evidence" value="ECO:0007669"/>
    <property type="project" value="UniProtKB-KW"/>
</dbReference>
<dbReference type="GO" id="GO:0046872">
    <property type="term" value="F:metal ion binding"/>
    <property type="evidence" value="ECO:0007669"/>
    <property type="project" value="UniProtKB-KW"/>
</dbReference>
<dbReference type="GO" id="GO:0106310">
    <property type="term" value="F:protein serine kinase activity"/>
    <property type="evidence" value="ECO:0007669"/>
    <property type="project" value="RHEA"/>
</dbReference>
<dbReference type="GO" id="GO:0004674">
    <property type="term" value="F:protein serine/threonine kinase activity"/>
    <property type="evidence" value="ECO:0000250"/>
    <property type="project" value="UniProtKB"/>
</dbReference>
<dbReference type="GO" id="GO:0034599">
    <property type="term" value="P:cellular response to oxidative stress"/>
    <property type="evidence" value="ECO:0007669"/>
    <property type="project" value="Ensembl"/>
</dbReference>
<dbReference type="GO" id="GO:0009267">
    <property type="term" value="P:cellular response to starvation"/>
    <property type="evidence" value="ECO:0000250"/>
    <property type="project" value="UniProtKB"/>
</dbReference>
<dbReference type="GO" id="GO:0097194">
    <property type="term" value="P:execution phase of apoptosis"/>
    <property type="evidence" value="ECO:0007669"/>
    <property type="project" value="Ensembl"/>
</dbReference>
<dbReference type="GO" id="GO:0008631">
    <property type="term" value="P:intrinsic apoptotic signaling pathway in response to oxidative stress"/>
    <property type="evidence" value="ECO:0000250"/>
    <property type="project" value="UniProtKB"/>
</dbReference>
<dbReference type="GO" id="GO:0030336">
    <property type="term" value="P:negative regulation of cell migration"/>
    <property type="evidence" value="ECO:0000250"/>
    <property type="project" value="UniProtKB"/>
</dbReference>
<dbReference type="GO" id="GO:0046777">
    <property type="term" value="P:protein autophosphorylation"/>
    <property type="evidence" value="ECO:0000250"/>
    <property type="project" value="UniProtKB"/>
</dbReference>
<dbReference type="GO" id="GO:0006468">
    <property type="term" value="P:protein phosphorylation"/>
    <property type="evidence" value="ECO:0000250"/>
    <property type="project" value="UniProtKB"/>
</dbReference>
<dbReference type="GO" id="GO:0048679">
    <property type="term" value="P:regulation of axon regeneration"/>
    <property type="evidence" value="ECO:0007669"/>
    <property type="project" value="Ensembl"/>
</dbReference>
<dbReference type="CDD" id="cd06609">
    <property type="entry name" value="STKc_MST3_like"/>
    <property type="match status" value="1"/>
</dbReference>
<dbReference type="FunFam" id="1.10.510.10:FF:000411">
    <property type="entry name" value="Probable Ste20-like kinase Don3"/>
    <property type="match status" value="1"/>
</dbReference>
<dbReference type="FunFam" id="1.10.12.70:FF:000002">
    <property type="entry name" value="Serine/threonine kinase 24"/>
    <property type="match status" value="1"/>
</dbReference>
<dbReference type="FunFam" id="3.30.200.20:FF:000252">
    <property type="entry name" value="Serine/threonine-protein kinase 26"/>
    <property type="match status" value="1"/>
</dbReference>
<dbReference type="Gene3D" id="1.10.12.70">
    <property type="match status" value="1"/>
</dbReference>
<dbReference type="Gene3D" id="3.30.200.20">
    <property type="entry name" value="Phosphorylase Kinase, domain 1"/>
    <property type="match status" value="1"/>
</dbReference>
<dbReference type="Gene3D" id="1.10.510.10">
    <property type="entry name" value="Transferase(Phosphotransferase) domain 1"/>
    <property type="match status" value="1"/>
</dbReference>
<dbReference type="InterPro" id="IPR011009">
    <property type="entry name" value="Kinase-like_dom_sf"/>
</dbReference>
<dbReference type="InterPro" id="IPR046409">
    <property type="entry name" value="PDC10_dimerisation_sf"/>
</dbReference>
<dbReference type="InterPro" id="IPR048288">
    <property type="entry name" value="PDCD10_N"/>
</dbReference>
<dbReference type="InterPro" id="IPR000719">
    <property type="entry name" value="Prot_kinase_dom"/>
</dbReference>
<dbReference type="InterPro" id="IPR017441">
    <property type="entry name" value="Protein_kinase_ATP_BS"/>
</dbReference>
<dbReference type="InterPro" id="IPR050629">
    <property type="entry name" value="STE20/SPS1-PAK"/>
</dbReference>
<dbReference type="PANTHER" id="PTHR48012:SF22">
    <property type="entry name" value="SERINE_THREONINE-PROTEIN KINASE 24"/>
    <property type="match status" value="1"/>
</dbReference>
<dbReference type="PANTHER" id="PTHR48012">
    <property type="entry name" value="STERILE20-LIKE KINASE, ISOFORM B-RELATED"/>
    <property type="match status" value="1"/>
</dbReference>
<dbReference type="Pfam" id="PF20929">
    <property type="entry name" value="PDCD10_N"/>
    <property type="match status" value="1"/>
</dbReference>
<dbReference type="Pfam" id="PF00069">
    <property type="entry name" value="Pkinase"/>
    <property type="match status" value="1"/>
</dbReference>
<dbReference type="SMART" id="SM00220">
    <property type="entry name" value="S_TKc"/>
    <property type="match status" value="1"/>
</dbReference>
<dbReference type="SUPFAM" id="SSF56112">
    <property type="entry name" value="Protein kinase-like (PK-like)"/>
    <property type="match status" value="1"/>
</dbReference>
<dbReference type="PROSITE" id="PS00107">
    <property type="entry name" value="PROTEIN_KINASE_ATP"/>
    <property type="match status" value="1"/>
</dbReference>
<dbReference type="PROSITE" id="PS50011">
    <property type="entry name" value="PROTEIN_KINASE_DOM"/>
    <property type="match status" value="1"/>
</dbReference>
<proteinExistence type="evidence at protein level"/>
<feature type="initiator methionine" description="Removed" evidence="7 8">
    <location>
        <position position="1"/>
    </location>
</feature>
<feature type="chain" id="PRO_0000086712" description="Serine/threonine-protein kinase 24">
    <location>
        <begin position="2"/>
        <end position="431"/>
    </location>
</feature>
<feature type="chain" id="PRO_0000413620" description="Serine/threonine-protein kinase 24 35 kDa subunit" evidence="1">
    <location>
        <begin position="2"/>
        <end position="313"/>
    </location>
</feature>
<feature type="chain" id="PRO_0000413621" description="Serine/threonine-protein kinase 24 12 kDa subunit" evidence="1">
    <location>
        <begin position="314"/>
        <end position="431"/>
    </location>
</feature>
<feature type="domain" description="Protein kinase" evidence="3">
    <location>
        <begin position="24"/>
        <end position="274"/>
    </location>
</feature>
<feature type="region of interest" description="Disordered" evidence="4">
    <location>
        <begin position="297"/>
        <end position="325"/>
    </location>
</feature>
<feature type="short sequence motif" description="Bipartite nuclear localization signal" evidence="1">
    <location>
        <begin position="266"/>
        <end position="280"/>
    </location>
</feature>
<feature type="short sequence motif" description="Nuclear export signal (NES)" evidence="1">
    <location>
        <begin position="323"/>
        <end position="374"/>
    </location>
</feature>
<feature type="active site" description="Proton acceptor" evidence="3">
    <location>
        <position position="144"/>
    </location>
</feature>
<feature type="binding site" evidence="3">
    <location>
        <begin position="30"/>
        <end position="38"/>
    </location>
    <ligand>
        <name>ATP</name>
        <dbReference type="ChEBI" id="CHEBI:30616"/>
    </ligand>
</feature>
<feature type="binding site" evidence="3">
    <location>
        <position position="53"/>
    </location>
    <ligand>
        <name>ATP</name>
        <dbReference type="ChEBI" id="CHEBI:30616"/>
    </ligand>
</feature>
<feature type="binding site" evidence="3">
    <location>
        <begin position="100"/>
        <end position="102"/>
    </location>
    <ligand>
        <name>ATP</name>
        <dbReference type="ChEBI" id="CHEBI:30616"/>
    </ligand>
</feature>
<feature type="binding site" evidence="1">
    <location>
        <position position="149"/>
    </location>
    <ligand>
        <name>Mg(2+)</name>
        <dbReference type="ChEBI" id="CHEBI:18420"/>
    </ligand>
</feature>
<feature type="binding site" evidence="1">
    <location>
        <position position="162"/>
    </location>
    <ligand>
        <name>Mg(2+)</name>
        <dbReference type="ChEBI" id="CHEBI:18420"/>
    </ligand>
</feature>
<feature type="site" description="Cleavage; by caspase-3, caspase-7 and caspase-8" evidence="1">
    <location>
        <begin position="313"/>
        <end position="314"/>
    </location>
</feature>
<feature type="modified residue" description="N-acetylalanine" evidence="7 8">
    <location>
        <position position="2"/>
    </location>
</feature>
<feature type="modified residue" description="Phosphoserine" evidence="8">
    <location>
        <position position="4"/>
    </location>
</feature>
<feature type="modified residue" description="Phosphothreonine; by autocatalysis" evidence="2">
    <location>
        <position position="178"/>
    </location>
</feature>
<feature type="modified residue" description="Phosphoserine" evidence="2">
    <location>
        <position position="308"/>
    </location>
</feature>
<reference key="1">
    <citation type="journal article" date="2004" name="Genome Res.">
        <title>The status, quality, and expansion of the NIH full-length cDNA project: the Mammalian Gene Collection (MGC).</title>
        <authorList>
            <consortium name="The MGC Project Team"/>
        </authorList>
    </citation>
    <scope>NUCLEOTIDE SEQUENCE [LARGE SCALE MRNA]</scope>
    <source>
        <strain>FVB/N</strain>
        <tissue>Mammary tumor</tissue>
    </source>
</reference>
<reference key="2">
    <citation type="journal article" date="2007" name="Proc. Natl. Acad. Sci. U.S.A.">
        <title>Large-scale phosphorylation analysis of mouse liver.</title>
        <authorList>
            <person name="Villen J."/>
            <person name="Beausoleil S.A."/>
            <person name="Gerber S.A."/>
            <person name="Gygi S.P."/>
        </authorList>
    </citation>
    <scope>ACETYLATION [LARGE SCALE ANALYSIS] AT ALA-2</scope>
    <scope>CLEAVAGE OF INITIATOR METHIONINE [LARGE SCALE ANALYSIS]</scope>
    <scope>IDENTIFICATION BY MASS SPECTROMETRY [LARGE SCALE ANALYSIS]</scope>
    <source>
        <tissue>Liver</tissue>
    </source>
</reference>
<reference key="3">
    <citation type="journal article" date="2009" name="Mol. Cell. Proteomics">
        <title>Large scale localization of protein phosphorylation by use of electron capture dissociation mass spectrometry.</title>
        <authorList>
            <person name="Sweet S.M."/>
            <person name="Bailey C.M."/>
            <person name="Cunningham D.L."/>
            <person name="Heath J.K."/>
            <person name="Cooper H.J."/>
        </authorList>
    </citation>
    <scope>ACETYLATION [LARGE SCALE ANALYSIS] AT ALA-2</scope>
    <scope>PHOSPHORYLATION [LARGE SCALE ANALYSIS] AT SER-4</scope>
    <scope>CLEAVAGE OF INITIATOR METHIONINE [LARGE SCALE ANALYSIS]</scope>
    <scope>IDENTIFICATION BY MASS SPECTROMETRY [LARGE SCALE ANALYSIS]</scope>
    <source>
        <tissue>Embryonic fibroblast</tissue>
    </source>
</reference>
<reference key="4">
    <citation type="journal article" date="2010" name="Cell">
        <title>A tissue-specific atlas of mouse protein phosphorylation and expression.</title>
        <authorList>
            <person name="Huttlin E.L."/>
            <person name="Jedrychowski M.P."/>
            <person name="Elias J.E."/>
            <person name="Goswami T."/>
            <person name="Rad R."/>
            <person name="Beausoleil S.A."/>
            <person name="Villen J."/>
            <person name="Haas W."/>
            <person name="Sowa M.E."/>
            <person name="Gygi S.P."/>
        </authorList>
    </citation>
    <scope>IDENTIFICATION BY MASS SPECTROMETRY [LARGE SCALE ANALYSIS]</scope>
    <source>
        <tissue>Brown adipose tissue</tissue>
        <tissue>Kidney</tissue>
        <tissue>Lung</tissue>
        <tissue>Spleen</tissue>
        <tissue>Testis</tissue>
    </source>
</reference>
<evidence type="ECO:0000250" key="1"/>
<evidence type="ECO:0000250" key="2">
    <source>
        <dbReference type="UniProtKB" id="Q9Y6E0"/>
    </source>
</evidence>
<evidence type="ECO:0000255" key="3">
    <source>
        <dbReference type="PROSITE-ProRule" id="PRU00159"/>
    </source>
</evidence>
<evidence type="ECO:0000256" key="4">
    <source>
        <dbReference type="SAM" id="MobiDB-lite"/>
    </source>
</evidence>
<evidence type="ECO:0000305" key="5"/>
<evidence type="ECO:0000312" key="6">
    <source>
        <dbReference type="MGI" id="MGI:2385007"/>
    </source>
</evidence>
<evidence type="ECO:0007744" key="7">
    <source>
    </source>
</evidence>
<evidence type="ECO:0007744" key="8">
    <source>
    </source>
</evidence>
<accession>Q99KH8</accession>
<comment type="function">
    <text evidence="2">Serine/threonine-protein kinase that acts on both serine and threonine residues and promotes apoptosis in response to stress stimuli and caspase activation. Mediates oxidative-stress-induced cell death by modulating phosphorylation of JNK1-JNK2 (MAPK8 and MAPK9), p38 (MAPK11, MAPK12, MAPK13 and MAPK14) during oxidative stress. Plays a role in a staurosporine-induced caspase-independent apoptotic pathway by regulating the nuclear translocation of AIFM1 and ENDOG and the DNase activity associated with ENDOG. Phosphorylates STK38L on 'Thr-442' and stimulates its kinase activity. In association with STK26 negatively regulates Golgi reorientation in polarized cell migration upon RHO activation. Also regulates cellular migration with alteration of PTPN12 activity and PXN phosphorylation: phosphorylates PTPN12 and inhibits its activity and may regulate PXN phosphorylation through PTPN12. May act as a key regulator of axon regeneration in the optic nerve and radial nerve. Part of the striatin-interacting phosphatase and kinase (STRIPAK) complexes. STRIPAK complexes have critical roles in protein (de)phosphorylation and are regulators of multiple signaling pathways including Hippo, MAPK, nuclear receptor and cytoskeleton remodeling. Different types of STRIPAK complexes are involved in a variety of biological processes such as cell growth, differentiation, apoptosis, metabolism and immune regulation.</text>
</comment>
<comment type="catalytic activity">
    <reaction>
        <text>L-seryl-[protein] + ATP = O-phospho-L-seryl-[protein] + ADP + H(+)</text>
        <dbReference type="Rhea" id="RHEA:17989"/>
        <dbReference type="Rhea" id="RHEA-COMP:9863"/>
        <dbReference type="Rhea" id="RHEA-COMP:11604"/>
        <dbReference type="ChEBI" id="CHEBI:15378"/>
        <dbReference type="ChEBI" id="CHEBI:29999"/>
        <dbReference type="ChEBI" id="CHEBI:30616"/>
        <dbReference type="ChEBI" id="CHEBI:83421"/>
        <dbReference type="ChEBI" id="CHEBI:456216"/>
        <dbReference type="EC" id="2.7.11.1"/>
    </reaction>
</comment>
<comment type="catalytic activity">
    <reaction>
        <text>L-threonyl-[protein] + ATP = O-phospho-L-threonyl-[protein] + ADP + H(+)</text>
        <dbReference type="Rhea" id="RHEA:46608"/>
        <dbReference type="Rhea" id="RHEA-COMP:11060"/>
        <dbReference type="Rhea" id="RHEA-COMP:11605"/>
        <dbReference type="ChEBI" id="CHEBI:15378"/>
        <dbReference type="ChEBI" id="CHEBI:30013"/>
        <dbReference type="ChEBI" id="CHEBI:30616"/>
        <dbReference type="ChEBI" id="CHEBI:61977"/>
        <dbReference type="ChEBI" id="CHEBI:456216"/>
        <dbReference type="EC" id="2.7.11.1"/>
    </reaction>
</comment>
<comment type="cofactor">
    <cofactor evidence="1">
        <name>Mg(2+)</name>
        <dbReference type="ChEBI" id="CHEBI:18420"/>
    </cofactor>
    <cofactor evidence="1">
        <name>Mn(2+)</name>
        <dbReference type="ChEBI" id="CHEBI:29035"/>
    </cofactor>
    <cofactor evidence="1">
        <name>Co(2+)</name>
        <dbReference type="ChEBI" id="CHEBI:48828"/>
    </cofactor>
    <cofactor evidence="1">
        <name>Zn(2+)</name>
        <dbReference type="ChEBI" id="CHEBI:29105"/>
    </cofactor>
</comment>
<comment type="subunit">
    <text evidence="2">Monomer. Interacts with CTTNBP2NL. Interacts with RIPOR1 (via C-terminus); this interaction occurs in a PDCD10-dependent and Rho-independent manner. Interacts with PDCD10; this interaction is required for the association of STK24 with RIPOR1. Part of the core of STRIPAK complexes composed of PP2A catalytic and scaffolding subunits, the striatins (PP2A regulatory subunits), the striatin-associated proteins MOB4, STRIP1 and STRIP2, PDCD10 and members of the STE20 kinases, such as STK24 and STK26.</text>
</comment>
<comment type="subcellular location">
    <subcellularLocation>
        <location evidence="1">Cytoplasm</location>
    </subcellularLocation>
    <subcellularLocation>
        <location evidence="1">Nucleus</location>
    </subcellularLocation>
    <subcellularLocation>
        <location evidence="1">Membrane</location>
    </subcellularLocation>
    <text evidence="1">The truncated form (MST3/N) translocates to the nucleus. Colocalizes with STK38L in the membrane (By similarity).</text>
</comment>
<comment type="PTM">
    <text evidence="1">Proteolytically processed by caspases during apoptosis. Proteolytic cleavage results in kinase activation, nuclear translocation of the truncated form (MST3/N) and the induction of apoptosis (By similarity).</text>
</comment>
<comment type="PTM">
    <text evidence="1">Oxidative stress induces phosphorylation. Activated by autophosphorylation at Thr-178 and phosphorylation at this site is essential for its function. Manganese, magnesium and cobalt-dependent autophosphorylation is mainly on threonine residues while zinc-dependent autophosphorylation is on both serine and threonine residues (By similarity).</text>
</comment>
<comment type="similarity">
    <text evidence="5">Belongs to the protein kinase superfamily. STE Ser/Thr protein kinase family. STE20 subfamily.</text>
</comment>
<protein>
    <recommendedName>
        <fullName>Serine/threonine-protein kinase 24</fullName>
        <ecNumber>2.7.11.1</ecNumber>
    </recommendedName>
    <alternativeName>
        <fullName>Mammalian STE20-like protein kinase 3</fullName>
        <shortName>MST-3</shortName>
    </alternativeName>
    <alternativeName>
        <fullName>STE20-like kinase MST3</fullName>
    </alternativeName>
    <component>
        <recommendedName>
            <fullName>Serine/threonine-protein kinase 24 35 kDa subunit</fullName>
        </recommendedName>
        <alternativeName>
            <fullName>Mammalian STE20-like protein kinase 3 N-terminal</fullName>
            <shortName>MST3/N</shortName>
        </alternativeName>
    </component>
    <component>
        <recommendedName>
            <fullName>Serine/threonine-protein kinase 24 12 kDa subunit</fullName>
        </recommendedName>
        <alternativeName>
            <fullName>Mammalian STE20-like protein kinase 3 C-terminal</fullName>
            <shortName>MST3/C</shortName>
        </alternativeName>
    </component>
</protein>